<proteinExistence type="evidence at transcript level"/>
<keyword id="KW-0963">Cytoplasm</keyword>
<keyword id="KW-0238">DNA-binding</keyword>
<keyword id="KW-1185">Reference proteome</keyword>
<keyword id="KW-0804">Transcription</keyword>
<keyword id="KW-0805">Transcription regulation</keyword>
<reference key="1">
    <citation type="journal article" date="2001" name="Science">
        <title>The genome of the natural genetic engineer Agrobacterium tumefaciens C58.</title>
        <authorList>
            <person name="Wood D.W."/>
            <person name="Setubal J.C."/>
            <person name="Kaul R."/>
            <person name="Monks D.E."/>
            <person name="Kitajima J.P."/>
            <person name="Okura V.K."/>
            <person name="Zhou Y."/>
            <person name="Chen L."/>
            <person name="Wood G.E."/>
            <person name="Almeida N.F. Jr."/>
            <person name="Woo L."/>
            <person name="Chen Y."/>
            <person name="Paulsen I.T."/>
            <person name="Eisen J.A."/>
            <person name="Karp P.D."/>
            <person name="Bovee D. Sr."/>
            <person name="Chapman P."/>
            <person name="Clendenning J."/>
            <person name="Deatherage G."/>
            <person name="Gillet W."/>
            <person name="Grant C."/>
            <person name="Kutyavin T."/>
            <person name="Levy R."/>
            <person name="Li M.-J."/>
            <person name="McClelland E."/>
            <person name="Palmieri A."/>
            <person name="Raymond C."/>
            <person name="Rouse G."/>
            <person name="Saenphimmachak C."/>
            <person name="Wu Z."/>
            <person name="Romero P."/>
            <person name="Gordon D."/>
            <person name="Zhang S."/>
            <person name="Yoo H."/>
            <person name="Tao Y."/>
            <person name="Biddle P."/>
            <person name="Jung M."/>
            <person name="Krespan W."/>
            <person name="Perry M."/>
            <person name="Gordon-Kamm B."/>
            <person name="Liao L."/>
            <person name="Kim S."/>
            <person name="Hendrick C."/>
            <person name="Zhao Z.-Y."/>
            <person name="Dolan M."/>
            <person name="Chumley F."/>
            <person name="Tingey S.V."/>
            <person name="Tomb J.-F."/>
            <person name="Gordon M.P."/>
            <person name="Olson M.V."/>
            <person name="Nester E.W."/>
        </authorList>
    </citation>
    <scope>NUCLEOTIDE SEQUENCE [LARGE SCALE GENOMIC DNA]</scope>
    <source>
        <strain>C58 / ATCC 33970</strain>
    </source>
</reference>
<reference key="2">
    <citation type="journal article" date="2001" name="Science">
        <title>Genome sequence of the plant pathogen and biotechnology agent Agrobacterium tumefaciens C58.</title>
        <authorList>
            <person name="Goodner B."/>
            <person name="Hinkle G."/>
            <person name="Gattung S."/>
            <person name="Miller N."/>
            <person name="Blanchard M."/>
            <person name="Qurollo B."/>
            <person name="Goldman B.S."/>
            <person name="Cao Y."/>
            <person name="Askenazi M."/>
            <person name="Halling C."/>
            <person name="Mullin L."/>
            <person name="Houmiel K."/>
            <person name="Gordon J."/>
            <person name="Vaudin M."/>
            <person name="Iartchouk O."/>
            <person name="Epp A."/>
            <person name="Liu F."/>
            <person name="Wollam C."/>
            <person name="Allinger M."/>
            <person name="Doughty D."/>
            <person name="Scott C."/>
            <person name="Lappas C."/>
            <person name="Markelz B."/>
            <person name="Flanagan C."/>
            <person name="Crowell C."/>
            <person name="Gurson J."/>
            <person name="Lomo C."/>
            <person name="Sear C."/>
            <person name="Strub G."/>
            <person name="Cielo C."/>
            <person name="Slater S."/>
        </authorList>
    </citation>
    <scope>NUCLEOTIDE SEQUENCE [LARGE SCALE GENOMIC DNA]</scope>
    <source>
        <strain>C58 / ATCC 33970</strain>
    </source>
</reference>
<reference key="3">
    <citation type="journal article" date="2022" name="Proc. Natl. Acad. Sci. U.S.A.">
        <title>Oxidative desulfurization pathway for complete catabolism of sulfoquinovose by bacteria.</title>
        <authorList>
            <person name="Sharma M."/>
            <person name="Lingford J.P."/>
            <person name="Petricevic M."/>
            <person name="Snow A.J.D."/>
            <person name="Zhang Y."/>
            <person name="Jaervaa M.A."/>
            <person name="Mui J.W."/>
            <person name="Scott N.E."/>
            <person name="Saunders E.C."/>
            <person name="Mao R."/>
            <person name="Epa R."/>
            <person name="da Silva B.M."/>
            <person name="Pires D.E.V."/>
            <person name="Ascher D.B."/>
            <person name="McConville M.J."/>
            <person name="Davies G.J."/>
            <person name="Williams S.J."/>
            <person name="Goddard-Borger E.D."/>
        </authorList>
    </citation>
    <scope>FUNCTION</scope>
    <scope>INDUCTION</scope>
    <source>
        <strain>C58 / ATCC 33970</strain>
    </source>
</reference>
<feature type="chain" id="PRO_0000458919" description="HTH-type transcriptional regulator SmoD">
    <location>
        <begin position="1"/>
        <end position="234"/>
    </location>
</feature>
<feature type="domain" description="HTH gntR-type" evidence="1">
    <location>
        <begin position="8"/>
        <end position="76"/>
    </location>
</feature>
<feature type="DNA-binding region" description="H-T-H motif" evidence="1">
    <location>
        <begin position="36"/>
        <end position="55"/>
    </location>
</feature>
<dbReference type="EMBL" id="AE007870">
    <property type="protein sequence ID" value="AAK90110.1"/>
    <property type="molecule type" value="Genomic_DNA"/>
</dbReference>
<dbReference type="PIR" id="AB2960">
    <property type="entry name" value="AB2960"/>
</dbReference>
<dbReference type="PIR" id="D98323">
    <property type="entry name" value="D98323"/>
</dbReference>
<dbReference type="RefSeq" id="NP_357325.1">
    <property type="nucleotide sequence ID" value="NC_003063.2"/>
</dbReference>
<dbReference type="RefSeq" id="WP_010972907.1">
    <property type="nucleotide sequence ID" value="NC_003063.2"/>
</dbReference>
<dbReference type="SMR" id="A9CEY8"/>
<dbReference type="STRING" id="176299.Atu3280"/>
<dbReference type="EnsemblBacteria" id="AAK90110">
    <property type="protein sequence ID" value="AAK90110"/>
    <property type="gene ID" value="Atu3280"/>
</dbReference>
<dbReference type="GeneID" id="1135154"/>
<dbReference type="KEGG" id="atu:Atu3280"/>
<dbReference type="PATRIC" id="fig|176299.10.peg.3121"/>
<dbReference type="eggNOG" id="COG2188">
    <property type="taxonomic scope" value="Bacteria"/>
</dbReference>
<dbReference type="HOGENOM" id="CLU_063236_3_0_5"/>
<dbReference type="OrthoDB" id="9794015at2"/>
<dbReference type="PhylomeDB" id="A9CEY8"/>
<dbReference type="BioCyc" id="AGRO:ATU3280-MONOMER"/>
<dbReference type="Proteomes" id="UP000000813">
    <property type="component" value="Chromosome linear"/>
</dbReference>
<dbReference type="GO" id="GO:0005737">
    <property type="term" value="C:cytoplasm"/>
    <property type="evidence" value="ECO:0007669"/>
    <property type="project" value="UniProtKB-SubCell"/>
</dbReference>
<dbReference type="GO" id="GO:0003677">
    <property type="term" value="F:DNA binding"/>
    <property type="evidence" value="ECO:0007669"/>
    <property type="project" value="UniProtKB-KW"/>
</dbReference>
<dbReference type="GO" id="GO:0003700">
    <property type="term" value="F:DNA-binding transcription factor activity"/>
    <property type="evidence" value="ECO:0007669"/>
    <property type="project" value="InterPro"/>
</dbReference>
<dbReference type="GO" id="GO:0045892">
    <property type="term" value="P:negative regulation of DNA-templated transcription"/>
    <property type="evidence" value="ECO:0007669"/>
    <property type="project" value="TreeGrafter"/>
</dbReference>
<dbReference type="CDD" id="cd07377">
    <property type="entry name" value="WHTH_GntR"/>
    <property type="match status" value="1"/>
</dbReference>
<dbReference type="Gene3D" id="3.40.1410.10">
    <property type="entry name" value="Chorismate lyase-like"/>
    <property type="match status" value="1"/>
</dbReference>
<dbReference type="Gene3D" id="1.10.10.10">
    <property type="entry name" value="Winged helix-like DNA-binding domain superfamily/Winged helix DNA-binding domain"/>
    <property type="match status" value="1"/>
</dbReference>
<dbReference type="InterPro" id="IPR050679">
    <property type="entry name" value="Bact_HTH_transcr_reg"/>
</dbReference>
<dbReference type="InterPro" id="IPR028978">
    <property type="entry name" value="Chorismate_lyase_/UTRA_dom_sf"/>
</dbReference>
<dbReference type="InterPro" id="IPR000524">
    <property type="entry name" value="Tscrpt_reg_HTH_GntR"/>
</dbReference>
<dbReference type="InterPro" id="IPR011663">
    <property type="entry name" value="UTRA"/>
</dbReference>
<dbReference type="InterPro" id="IPR036388">
    <property type="entry name" value="WH-like_DNA-bd_sf"/>
</dbReference>
<dbReference type="InterPro" id="IPR036390">
    <property type="entry name" value="WH_DNA-bd_sf"/>
</dbReference>
<dbReference type="PANTHER" id="PTHR44846">
    <property type="entry name" value="MANNOSYL-D-GLYCERATE TRANSPORT/METABOLISM SYSTEM REPRESSOR MNGR-RELATED"/>
    <property type="match status" value="1"/>
</dbReference>
<dbReference type="PANTHER" id="PTHR44846:SF1">
    <property type="entry name" value="MANNOSYL-D-GLYCERATE TRANSPORT_METABOLISM SYSTEM REPRESSOR MNGR-RELATED"/>
    <property type="match status" value="1"/>
</dbReference>
<dbReference type="Pfam" id="PF00392">
    <property type="entry name" value="GntR"/>
    <property type="match status" value="1"/>
</dbReference>
<dbReference type="Pfam" id="PF07702">
    <property type="entry name" value="UTRA"/>
    <property type="match status" value="1"/>
</dbReference>
<dbReference type="SMART" id="SM00345">
    <property type="entry name" value="HTH_GNTR"/>
    <property type="match status" value="1"/>
</dbReference>
<dbReference type="SMART" id="SM00866">
    <property type="entry name" value="UTRA"/>
    <property type="match status" value="1"/>
</dbReference>
<dbReference type="SUPFAM" id="SSF64288">
    <property type="entry name" value="Chorismate lyase-like"/>
    <property type="match status" value="1"/>
</dbReference>
<dbReference type="SUPFAM" id="SSF46785">
    <property type="entry name" value="Winged helix' DNA-binding domain"/>
    <property type="match status" value="1"/>
</dbReference>
<dbReference type="PROSITE" id="PS50949">
    <property type="entry name" value="HTH_GNTR"/>
    <property type="match status" value="1"/>
</dbReference>
<comment type="function">
    <text evidence="5">Probably regulates expression of genes involved in the sulfoquinovose monooxygenase (sulfo-SMO) pathway (smoABCDEFGHI).</text>
</comment>
<comment type="subcellular location">
    <subcellularLocation>
        <location evidence="4">Cytoplasm</location>
    </subcellularLocation>
</comment>
<comment type="induction">
    <text evidence="2">Induced during growth on sulfoquinovose.</text>
</comment>
<organism>
    <name type="scientific">Agrobacterium fabrum (strain C58 / ATCC 33970)</name>
    <name type="common">Agrobacterium tumefaciens (strain C58)</name>
    <dbReference type="NCBI Taxonomy" id="176299"/>
    <lineage>
        <taxon>Bacteria</taxon>
        <taxon>Pseudomonadati</taxon>
        <taxon>Pseudomonadota</taxon>
        <taxon>Alphaproteobacteria</taxon>
        <taxon>Hyphomicrobiales</taxon>
        <taxon>Rhizobiaceae</taxon>
        <taxon>Rhizobium/Agrobacterium group</taxon>
        <taxon>Agrobacterium</taxon>
        <taxon>Agrobacterium tumefaciens complex</taxon>
    </lineage>
</organism>
<name>SMOD_AGRFC</name>
<gene>
    <name evidence="3" type="primary">smoD</name>
    <name evidence="6" type="ordered locus">Atu3280</name>
</gene>
<evidence type="ECO:0000255" key="1">
    <source>
        <dbReference type="PROSITE-ProRule" id="PRU00307"/>
    </source>
</evidence>
<evidence type="ECO:0000269" key="2">
    <source>
    </source>
</evidence>
<evidence type="ECO:0000303" key="3">
    <source>
    </source>
</evidence>
<evidence type="ECO:0000305" key="4"/>
<evidence type="ECO:0000305" key="5">
    <source>
    </source>
</evidence>
<evidence type="ECO:0000312" key="6">
    <source>
        <dbReference type="EMBL" id="AAK90110.1"/>
    </source>
</evidence>
<protein>
    <recommendedName>
        <fullName evidence="4">HTH-type transcriptional regulator SmoD</fullName>
    </recommendedName>
    <alternativeName>
        <fullName evidence="3">SQ monooxygenase cluster protein D</fullName>
    </alternativeName>
</protein>
<accession>A9CEY8</accession>
<sequence>MKHTGGSLPMYMQIAEMLVREVAAGRLIDGEKLAPERDMAADLGIAVGTLRKSLAELQERGLLERVQGSGNYIRAVSDPQSVYAFFRLELIEGGGLPTAEVLDVARLAKPADLPAFGTSTEGHRIRRLRRIAGKPAAIEEIWLDGSYVDTITIENMSESLYLYYRTRLNLWISKAEDRIDLGDVPEWAPEVFGQKAGSSVPRVLRLSQAQDGAVAEVSWTWFDHTVARYVSRIR</sequence>